<keyword id="KW-0997">Cell inner membrane</keyword>
<keyword id="KW-1003">Cell membrane</keyword>
<keyword id="KW-0444">Lipid biosynthesis</keyword>
<keyword id="KW-0443">Lipid metabolism</keyword>
<keyword id="KW-0472">Membrane</keyword>
<keyword id="KW-0594">Phospholipid biosynthesis</keyword>
<keyword id="KW-1208">Phospholipid metabolism</keyword>
<keyword id="KW-0808">Transferase</keyword>
<keyword id="KW-0812">Transmembrane</keyword>
<keyword id="KW-1133">Transmembrane helix</keyword>
<name>PLSY_HISS1</name>
<reference key="1">
    <citation type="journal article" date="2007" name="J. Bacteriol.">
        <title>Complete genome sequence of Haemophilus somnus (Histophilus somni) strain 129Pt and comparison to Haemophilus ducreyi 35000HP and Haemophilus influenzae Rd.</title>
        <authorList>
            <person name="Challacombe J.F."/>
            <person name="Duncan A.J."/>
            <person name="Brettin T.S."/>
            <person name="Bruce D."/>
            <person name="Chertkov O."/>
            <person name="Detter J.C."/>
            <person name="Han C.S."/>
            <person name="Misra M."/>
            <person name="Richardson P."/>
            <person name="Tapia R."/>
            <person name="Thayer N."/>
            <person name="Xie G."/>
            <person name="Inzana T.J."/>
        </authorList>
    </citation>
    <scope>NUCLEOTIDE SEQUENCE [LARGE SCALE GENOMIC DNA]</scope>
    <source>
        <strain>129Pt</strain>
    </source>
</reference>
<sequence length="192" mass="21752">MSLFAIIYMLFTYLLGSISSDVVICRFTERNDARVTNSNVLQKGEYRLVLVVFLCDVLKGMLPVWVGYYLGLTYFELGMVALAACLGHIFPIFFKFSGGKGVATAFGAIAPIAWGVAGSMLGTWLLIFLFSGYVALSTVVTALILPFYVWWFKPEFTFPVALVCCLLVYRHHENIQRLWRGQEDKIWSKFKK</sequence>
<dbReference type="EC" id="2.3.1.275" evidence="1"/>
<dbReference type="EMBL" id="CP000436">
    <property type="protein sequence ID" value="ABI25572.1"/>
    <property type="molecule type" value="Genomic_DNA"/>
</dbReference>
<dbReference type="SMR" id="Q0I4T6"/>
<dbReference type="KEGG" id="hso:HS_1297"/>
<dbReference type="eggNOG" id="COG0344">
    <property type="taxonomic scope" value="Bacteria"/>
</dbReference>
<dbReference type="HOGENOM" id="CLU_081254_0_2_6"/>
<dbReference type="UniPathway" id="UPA00085"/>
<dbReference type="GO" id="GO:0005886">
    <property type="term" value="C:plasma membrane"/>
    <property type="evidence" value="ECO:0007669"/>
    <property type="project" value="UniProtKB-SubCell"/>
</dbReference>
<dbReference type="GO" id="GO:0043772">
    <property type="term" value="F:acyl-phosphate glycerol-3-phosphate acyltransferase activity"/>
    <property type="evidence" value="ECO:0007669"/>
    <property type="project" value="UniProtKB-UniRule"/>
</dbReference>
<dbReference type="GO" id="GO:0008654">
    <property type="term" value="P:phospholipid biosynthetic process"/>
    <property type="evidence" value="ECO:0007669"/>
    <property type="project" value="UniProtKB-UniRule"/>
</dbReference>
<dbReference type="HAMAP" id="MF_01043">
    <property type="entry name" value="PlsY"/>
    <property type="match status" value="1"/>
</dbReference>
<dbReference type="InterPro" id="IPR003811">
    <property type="entry name" value="G3P_acylTferase_PlsY"/>
</dbReference>
<dbReference type="NCBIfam" id="TIGR00023">
    <property type="entry name" value="glycerol-3-phosphate 1-O-acyltransferase PlsY"/>
    <property type="match status" value="1"/>
</dbReference>
<dbReference type="PANTHER" id="PTHR30309:SF0">
    <property type="entry name" value="GLYCEROL-3-PHOSPHATE ACYLTRANSFERASE-RELATED"/>
    <property type="match status" value="1"/>
</dbReference>
<dbReference type="PANTHER" id="PTHR30309">
    <property type="entry name" value="INNER MEMBRANE PROTEIN YGIH"/>
    <property type="match status" value="1"/>
</dbReference>
<dbReference type="Pfam" id="PF02660">
    <property type="entry name" value="G3P_acyltransf"/>
    <property type="match status" value="1"/>
</dbReference>
<dbReference type="SMART" id="SM01207">
    <property type="entry name" value="G3P_acyltransf"/>
    <property type="match status" value="1"/>
</dbReference>
<gene>
    <name evidence="1" type="primary">plsY</name>
    <name type="ordered locus">HS_1297</name>
</gene>
<protein>
    <recommendedName>
        <fullName evidence="1">Glycerol-3-phosphate acyltransferase</fullName>
    </recommendedName>
    <alternativeName>
        <fullName evidence="1">Acyl-PO4 G3P acyltransferase</fullName>
    </alternativeName>
    <alternativeName>
        <fullName evidence="1">Acyl-phosphate--glycerol-3-phosphate acyltransferase</fullName>
    </alternativeName>
    <alternativeName>
        <fullName evidence="1">G3P acyltransferase</fullName>
        <shortName evidence="1">GPAT</shortName>
        <ecNumber evidence="1">2.3.1.275</ecNumber>
    </alternativeName>
    <alternativeName>
        <fullName evidence="1">Lysophosphatidic acid synthase</fullName>
        <shortName evidence="1">LPA synthase</shortName>
    </alternativeName>
</protein>
<comment type="function">
    <text evidence="1">Catalyzes the transfer of an acyl group from acyl-phosphate (acyl-PO(4)) to glycerol-3-phosphate (G3P) to form lysophosphatidic acid (LPA). This enzyme utilizes acyl-phosphate as fatty acyl donor, but not acyl-CoA or acyl-ACP.</text>
</comment>
<comment type="catalytic activity">
    <reaction evidence="1">
        <text>an acyl phosphate + sn-glycerol 3-phosphate = a 1-acyl-sn-glycero-3-phosphate + phosphate</text>
        <dbReference type="Rhea" id="RHEA:34075"/>
        <dbReference type="ChEBI" id="CHEBI:43474"/>
        <dbReference type="ChEBI" id="CHEBI:57597"/>
        <dbReference type="ChEBI" id="CHEBI:57970"/>
        <dbReference type="ChEBI" id="CHEBI:59918"/>
        <dbReference type="EC" id="2.3.1.275"/>
    </reaction>
</comment>
<comment type="pathway">
    <text evidence="1">Lipid metabolism; phospholipid metabolism.</text>
</comment>
<comment type="subunit">
    <text evidence="1">Probably interacts with PlsX.</text>
</comment>
<comment type="subcellular location">
    <subcellularLocation>
        <location evidence="1">Cell inner membrane</location>
        <topology evidence="1">Multi-pass membrane protein</topology>
    </subcellularLocation>
</comment>
<comment type="similarity">
    <text evidence="1">Belongs to the PlsY family.</text>
</comment>
<feature type="chain" id="PRO_1000064183" description="Glycerol-3-phosphate acyltransferase">
    <location>
        <begin position="1"/>
        <end position="192"/>
    </location>
</feature>
<feature type="transmembrane region" description="Helical" evidence="1">
    <location>
        <begin position="4"/>
        <end position="24"/>
    </location>
</feature>
<feature type="transmembrane region" description="Helical" evidence="1">
    <location>
        <begin position="48"/>
        <end position="68"/>
    </location>
</feature>
<feature type="transmembrane region" description="Helical" evidence="1">
    <location>
        <begin position="74"/>
        <end position="94"/>
    </location>
</feature>
<feature type="transmembrane region" description="Helical" evidence="1">
    <location>
        <begin position="101"/>
        <end position="121"/>
    </location>
</feature>
<feature type="transmembrane region" description="Helical" evidence="1">
    <location>
        <begin position="125"/>
        <end position="145"/>
    </location>
</feature>
<proteinExistence type="inferred from homology"/>
<organism>
    <name type="scientific">Histophilus somni (strain 129Pt)</name>
    <name type="common">Haemophilus somnus</name>
    <dbReference type="NCBI Taxonomy" id="205914"/>
    <lineage>
        <taxon>Bacteria</taxon>
        <taxon>Pseudomonadati</taxon>
        <taxon>Pseudomonadota</taxon>
        <taxon>Gammaproteobacteria</taxon>
        <taxon>Pasteurellales</taxon>
        <taxon>Pasteurellaceae</taxon>
        <taxon>Histophilus</taxon>
    </lineage>
</organism>
<evidence type="ECO:0000255" key="1">
    <source>
        <dbReference type="HAMAP-Rule" id="MF_01043"/>
    </source>
</evidence>
<accession>Q0I4T6</accession>